<keyword id="KW-0067">ATP-binding</keyword>
<keyword id="KW-0436">Ligase</keyword>
<keyword id="KW-0479">Metal-binding</keyword>
<keyword id="KW-0547">Nucleotide-binding</keyword>
<keyword id="KW-0671">Queuosine biosynthesis</keyword>
<keyword id="KW-1185">Reference proteome</keyword>
<keyword id="KW-0862">Zinc</keyword>
<name>QUEC_ALIF1</name>
<comment type="function">
    <text evidence="1">Catalyzes the ATP-dependent conversion of 7-carboxy-7-deazaguanine (CDG) to 7-cyano-7-deazaguanine (preQ(0)).</text>
</comment>
<comment type="catalytic activity">
    <reaction evidence="1">
        <text>7-carboxy-7-deazaguanine + NH4(+) + ATP = 7-cyano-7-deazaguanine + ADP + phosphate + H2O + H(+)</text>
        <dbReference type="Rhea" id="RHEA:27982"/>
        <dbReference type="ChEBI" id="CHEBI:15377"/>
        <dbReference type="ChEBI" id="CHEBI:15378"/>
        <dbReference type="ChEBI" id="CHEBI:28938"/>
        <dbReference type="ChEBI" id="CHEBI:30616"/>
        <dbReference type="ChEBI" id="CHEBI:43474"/>
        <dbReference type="ChEBI" id="CHEBI:45075"/>
        <dbReference type="ChEBI" id="CHEBI:61036"/>
        <dbReference type="ChEBI" id="CHEBI:456216"/>
        <dbReference type="EC" id="6.3.4.20"/>
    </reaction>
</comment>
<comment type="cofactor">
    <cofactor evidence="1">
        <name>Zn(2+)</name>
        <dbReference type="ChEBI" id="CHEBI:29105"/>
    </cofactor>
    <text evidence="1">Binds 1 zinc ion per subunit.</text>
</comment>
<comment type="pathway">
    <text evidence="1">Purine metabolism; 7-cyano-7-deazaguanine biosynthesis.</text>
</comment>
<comment type="similarity">
    <text evidence="1">Belongs to the QueC family.</text>
</comment>
<gene>
    <name evidence="1" type="primary">queC</name>
    <name type="ordered locus">VF_1580</name>
</gene>
<feature type="chain" id="PRO_0000246956" description="7-cyano-7-deazaguanine synthase">
    <location>
        <begin position="1"/>
        <end position="227"/>
    </location>
</feature>
<feature type="binding site" evidence="1">
    <location>
        <begin position="8"/>
        <end position="18"/>
    </location>
    <ligand>
        <name>ATP</name>
        <dbReference type="ChEBI" id="CHEBI:30616"/>
    </ligand>
</feature>
<feature type="binding site" evidence="1">
    <location>
        <position position="187"/>
    </location>
    <ligand>
        <name>Zn(2+)</name>
        <dbReference type="ChEBI" id="CHEBI:29105"/>
    </ligand>
</feature>
<feature type="binding site" evidence="1">
    <location>
        <position position="196"/>
    </location>
    <ligand>
        <name>Zn(2+)</name>
        <dbReference type="ChEBI" id="CHEBI:29105"/>
    </ligand>
</feature>
<feature type="binding site" evidence="1">
    <location>
        <position position="199"/>
    </location>
    <ligand>
        <name>Zn(2+)</name>
        <dbReference type="ChEBI" id="CHEBI:29105"/>
    </ligand>
</feature>
<feature type="binding site" evidence="1">
    <location>
        <position position="202"/>
    </location>
    <ligand>
        <name>Zn(2+)</name>
        <dbReference type="ChEBI" id="CHEBI:29105"/>
    </ligand>
</feature>
<sequence length="227" mass="25012">MSTAIVVFSGGQDSTTCLIQALTQYDHVHCITFDYGQRHNQEIEVAKKVSIELGAASHKVMDVGLLNELAVSSLTRDNIPVSHELQENGLPNSFVPGRNILFLTLAGIYAYQLGAEAVITGVCETDFSGYPDCRDEFVKSINQSLVLGMDRQLEIKTPLMWLNKAETWALADKYGKLDYVRNHTLTCYNGVIGDGCGDCPSCDLRKNGLDAYLENKEPVMADLESKL</sequence>
<organism>
    <name type="scientific">Aliivibrio fischeri (strain ATCC 700601 / ES114)</name>
    <name type="common">Vibrio fischeri</name>
    <dbReference type="NCBI Taxonomy" id="312309"/>
    <lineage>
        <taxon>Bacteria</taxon>
        <taxon>Pseudomonadati</taxon>
        <taxon>Pseudomonadota</taxon>
        <taxon>Gammaproteobacteria</taxon>
        <taxon>Vibrionales</taxon>
        <taxon>Vibrionaceae</taxon>
        <taxon>Aliivibrio</taxon>
    </lineage>
</organism>
<protein>
    <recommendedName>
        <fullName evidence="1">7-cyano-7-deazaguanine synthase</fullName>
        <ecNumber evidence="1">6.3.4.20</ecNumber>
    </recommendedName>
    <alternativeName>
        <fullName evidence="1">7-cyano-7-carbaguanine synthase</fullName>
    </alternativeName>
    <alternativeName>
        <fullName evidence="1">PreQ(0) synthase</fullName>
    </alternativeName>
    <alternativeName>
        <fullName evidence="1">Queuosine biosynthesis protein QueC</fullName>
    </alternativeName>
</protein>
<reference key="1">
    <citation type="journal article" date="2005" name="Proc. Natl. Acad. Sci. U.S.A.">
        <title>Complete genome sequence of Vibrio fischeri: a symbiotic bacterium with pathogenic congeners.</title>
        <authorList>
            <person name="Ruby E.G."/>
            <person name="Urbanowski M."/>
            <person name="Campbell J."/>
            <person name="Dunn A."/>
            <person name="Faini M."/>
            <person name="Gunsalus R."/>
            <person name="Lostroh P."/>
            <person name="Lupp C."/>
            <person name="McCann J."/>
            <person name="Millikan D."/>
            <person name="Schaefer A."/>
            <person name="Stabb E."/>
            <person name="Stevens A."/>
            <person name="Visick K."/>
            <person name="Whistler C."/>
            <person name="Greenberg E.P."/>
        </authorList>
    </citation>
    <scope>NUCLEOTIDE SEQUENCE [LARGE SCALE GENOMIC DNA]</scope>
    <source>
        <strain>ATCC 700601 / ES114</strain>
    </source>
</reference>
<dbReference type="EC" id="6.3.4.20" evidence="1"/>
<dbReference type="EMBL" id="CP000020">
    <property type="protein sequence ID" value="AAW86075.1"/>
    <property type="molecule type" value="Genomic_DNA"/>
</dbReference>
<dbReference type="RefSeq" id="WP_011262150.1">
    <property type="nucleotide sequence ID" value="NC_006840.2"/>
</dbReference>
<dbReference type="RefSeq" id="YP_204963.1">
    <property type="nucleotide sequence ID" value="NC_006840.2"/>
</dbReference>
<dbReference type="SMR" id="Q5E4H1"/>
<dbReference type="STRING" id="312309.VF_1580"/>
<dbReference type="EnsemblBacteria" id="AAW86075">
    <property type="protein sequence ID" value="AAW86075"/>
    <property type="gene ID" value="VF_1580"/>
</dbReference>
<dbReference type="GeneID" id="54164260"/>
<dbReference type="KEGG" id="vfi:VF_1580"/>
<dbReference type="PATRIC" id="fig|312309.11.peg.1599"/>
<dbReference type="eggNOG" id="COG0603">
    <property type="taxonomic scope" value="Bacteria"/>
</dbReference>
<dbReference type="HOGENOM" id="CLU_081854_0_0_6"/>
<dbReference type="OrthoDB" id="9789567at2"/>
<dbReference type="UniPathway" id="UPA00391"/>
<dbReference type="Proteomes" id="UP000000537">
    <property type="component" value="Chromosome I"/>
</dbReference>
<dbReference type="GO" id="GO:0005524">
    <property type="term" value="F:ATP binding"/>
    <property type="evidence" value="ECO:0007669"/>
    <property type="project" value="UniProtKB-UniRule"/>
</dbReference>
<dbReference type="GO" id="GO:0016879">
    <property type="term" value="F:ligase activity, forming carbon-nitrogen bonds"/>
    <property type="evidence" value="ECO:0007669"/>
    <property type="project" value="UniProtKB-UniRule"/>
</dbReference>
<dbReference type="GO" id="GO:0008270">
    <property type="term" value="F:zinc ion binding"/>
    <property type="evidence" value="ECO:0007669"/>
    <property type="project" value="UniProtKB-UniRule"/>
</dbReference>
<dbReference type="GO" id="GO:0008616">
    <property type="term" value="P:queuosine biosynthetic process"/>
    <property type="evidence" value="ECO:0007669"/>
    <property type="project" value="UniProtKB-UniRule"/>
</dbReference>
<dbReference type="CDD" id="cd01995">
    <property type="entry name" value="QueC-like"/>
    <property type="match status" value="1"/>
</dbReference>
<dbReference type="FunFam" id="3.40.50.620:FF:000017">
    <property type="entry name" value="7-cyano-7-deazaguanine synthase"/>
    <property type="match status" value="1"/>
</dbReference>
<dbReference type="Gene3D" id="3.40.50.620">
    <property type="entry name" value="HUPs"/>
    <property type="match status" value="1"/>
</dbReference>
<dbReference type="HAMAP" id="MF_01633">
    <property type="entry name" value="QueC"/>
    <property type="match status" value="1"/>
</dbReference>
<dbReference type="InterPro" id="IPR018317">
    <property type="entry name" value="QueC"/>
</dbReference>
<dbReference type="InterPro" id="IPR014729">
    <property type="entry name" value="Rossmann-like_a/b/a_fold"/>
</dbReference>
<dbReference type="NCBIfam" id="TIGR00364">
    <property type="entry name" value="7-cyano-7-deazaguanine synthase QueC"/>
    <property type="match status" value="1"/>
</dbReference>
<dbReference type="NCBIfam" id="NF008317">
    <property type="entry name" value="PRK11106.1"/>
    <property type="match status" value="1"/>
</dbReference>
<dbReference type="PANTHER" id="PTHR42914">
    <property type="entry name" value="7-CYANO-7-DEAZAGUANINE SYNTHASE"/>
    <property type="match status" value="1"/>
</dbReference>
<dbReference type="PANTHER" id="PTHR42914:SF1">
    <property type="entry name" value="7-CYANO-7-DEAZAGUANINE SYNTHASE"/>
    <property type="match status" value="1"/>
</dbReference>
<dbReference type="Pfam" id="PF06508">
    <property type="entry name" value="QueC"/>
    <property type="match status" value="1"/>
</dbReference>
<dbReference type="PIRSF" id="PIRSF006293">
    <property type="entry name" value="ExsB"/>
    <property type="match status" value="1"/>
</dbReference>
<dbReference type="SUPFAM" id="SSF52402">
    <property type="entry name" value="Adenine nucleotide alpha hydrolases-like"/>
    <property type="match status" value="1"/>
</dbReference>
<proteinExistence type="inferred from homology"/>
<accession>Q5E4H1</accession>
<evidence type="ECO:0000255" key="1">
    <source>
        <dbReference type="HAMAP-Rule" id="MF_01633"/>
    </source>
</evidence>